<keyword id="KW-0963">Cytoplasm</keyword>
<keyword id="KW-0456">Lyase</keyword>
<keyword id="KW-1185">Reference proteome</keyword>
<keyword id="KW-0704">Schiff base</keyword>
<reference key="1">
    <citation type="submission" date="2007-10" db="EMBL/GenBank/DDBJ databases">
        <title>Complete genome of Alkaliphilus oremlandii OhILAs.</title>
        <authorList>
            <person name="Copeland A."/>
            <person name="Lucas S."/>
            <person name="Lapidus A."/>
            <person name="Barry K."/>
            <person name="Detter J.C."/>
            <person name="Glavina del Rio T."/>
            <person name="Hammon N."/>
            <person name="Israni S."/>
            <person name="Dalin E."/>
            <person name="Tice H."/>
            <person name="Pitluck S."/>
            <person name="Chain P."/>
            <person name="Malfatti S."/>
            <person name="Shin M."/>
            <person name="Vergez L."/>
            <person name="Schmutz J."/>
            <person name="Larimer F."/>
            <person name="Land M."/>
            <person name="Hauser L."/>
            <person name="Kyrpides N."/>
            <person name="Mikhailova N."/>
            <person name="Stolz J.F."/>
            <person name="Dawson A."/>
            <person name="Fisher E."/>
            <person name="Crable B."/>
            <person name="Perera E."/>
            <person name="Lisak J."/>
            <person name="Ranganathan M."/>
            <person name="Basu P."/>
            <person name="Richardson P."/>
        </authorList>
    </citation>
    <scope>NUCLEOTIDE SEQUENCE [LARGE SCALE GENOMIC DNA]</scope>
    <source>
        <strain>OhILAs</strain>
    </source>
</reference>
<organism>
    <name type="scientific">Alkaliphilus oremlandii (strain OhILAs)</name>
    <name type="common">Clostridium oremlandii (strain OhILAs)</name>
    <dbReference type="NCBI Taxonomy" id="350688"/>
    <lineage>
        <taxon>Bacteria</taxon>
        <taxon>Bacillati</taxon>
        <taxon>Bacillota</taxon>
        <taxon>Clostridia</taxon>
        <taxon>Peptostreptococcales</taxon>
        <taxon>Natronincolaceae</taxon>
        <taxon>Alkaliphilus</taxon>
    </lineage>
</organism>
<comment type="function">
    <text evidence="1">Catalyzes a reversible aldol reaction between acetaldehyde and D-glyceraldehyde 3-phosphate to generate 2-deoxy-D-ribose 5-phosphate.</text>
</comment>
<comment type="catalytic activity">
    <reaction evidence="1">
        <text>2-deoxy-D-ribose 5-phosphate = D-glyceraldehyde 3-phosphate + acetaldehyde</text>
        <dbReference type="Rhea" id="RHEA:12821"/>
        <dbReference type="ChEBI" id="CHEBI:15343"/>
        <dbReference type="ChEBI" id="CHEBI:59776"/>
        <dbReference type="ChEBI" id="CHEBI:62877"/>
        <dbReference type="EC" id="4.1.2.4"/>
    </reaction>
</comment>
<comment type="pathway">
    <text evidence="1">Carbohydrate degradation; 2-deoxy-D-ribose 1-phosphate degradation; D-glyceraldehyde 3-phosphate and acetaldehyde from 2-deoxy-alpha-D-ribose 1-phosphate: step 2/2.</text>
</comment>
<comment type="subcellular location">
    <subcellularLocation>
        <location evidence="1">Cytoplasm</location>
    </subcellularLocation>
</comment>
<comment type="similarity">
    <text evidence="1">Belongs to the DeoC/FbaB aldolase family. DeoC type 1 subfamily.</text>
</comment>
<accession>A8MH18</accession>
<sequence>MNIAKYIDHTLLKADATKQDIKKICDEAREQGFYSVCVNGANVAYAHSLLTGTDVKVAAVVGFPLGAMTTEAKVFETSDVIAKGAQEIDMVINIAALKEGNDAEIIKDIKAVVDIANGKAIVKVIIEACLLSQEEKIRACQLAKEAGAHFVKTSTGFSTGGATVEDIKLMRETVGPEIGVKGSGGIRDLKTALAMIEAGATRIGASASVSIVNDEKDNTAGY</sequence>
<name>DEOC_ALKOO</name>
<proteinExistence type="inferred from homology"/>
<protein>
    <recommendedName>
        <fullName evidence="1">Deoxyribose-phosphate aldolase</fullName>
        <shortName evidence="1">DERA</shortName>
        <ecNumber evidence="1">4.1.2.4</ecNumber>
    </recommendedName>
    <alternativeName>
        <fullName evidence="1">2-deoxy-D-ribose 5-phosphate aldolase</fullName>
    </alternativeName>
    <alternativeName>
        <fullName evidence="1">Phosphodeoxyriboaldolase</fullName>
        <shortName evidence="1">Deoxyriboaldolase</shortName>
    </alternativeName>
</protein>
<evidence type="ECO:0000255" key="1">
    <source>
        <dbReference type="HAMAP-Rule" id="MF_00114"/>
    </source>
</evidence>
<dbReference type="EC" id="4.1.2.4" evidence="1"/>
<dbReference type="EMBL" id="CP000853">
    <property type="protein sequence ID" value="ABW18905.1"/>
    <property type="molecule type" value="Genomic_DNA"/>
</dbReference>
<dbReference type="RefSeq" id="WP_012159217.1">
    <property type="nucleotide sequence ID" value="NC_009922.1"/>
</dbReference>
<dbReference type="SMR" id="A8MH18"/>
<dbReference type="STRING" id="350688.Clos_1361"/>
<dbReference type="KEGG" id="aoe:Clos_1361"/>
<dbReference type="eggNOG" id="COG0274">
    <property type="taxonomic scope" value="Bacteria"/>
</dbReference>
<dbReference type="HOGENOM" id="CLU_053595_0_2_9"/>
<dbReference type="OrthoDB" id="9778711at2"/>
<dbReference type="UniPathway" id="UPA00002">
    <property type="reaction ID" value="UER00468"/>
</dbReference>
<dbReference type="Proteomes" id="UP000000269">
    <property type="component" value="Chromosome"/>
</dbReference>
<dbReference type="GO" id="GO:0005737">
    <property type="term" value="C:cytoplasm"/>
    <property type="evidence" value="ECO:0007669"/>
    <property type="project" value="UniProtKB-SubCell"/>
</dbReference>
<dbReference type="GO" id="GO:0004139">
    <property type="term" value="F:deoxyribose-phosphate aldolase activity"/>
    <property type="evidence" value="ECO:0007669"/>
    <property type="project" value="UniProtKB-UniRule"/>
</dbReference>
<dbReference type="GO" id="GO:0006018">
    <property type="term" value="P:2-deoxyribose 1-phosphate catabolic process"/>
    <property type="evidence" value="ECO:0007669"/>
    <property type="project" value="UniProtKB-UniRule"/>
</dbReference>
<dbReference type="GO" id="GO:0016052">
    <property type="term" value="P:carbohydrate catabolic process"/>
    <property type="evidence" value="ECO:0007669"/>
    <property type="project" value="TreeGrafter"/>
</dbReference>
<dbReference type="GO" id="GO:0009264">
    <property type="term" value="P:deoxyribonucleotide catabolic process"/>
    <property type="evidence" value="ECO:0007669"/>
    <property type="project" value="InterPro"/>
</dbReference>
<dbReference type="CDD" id="cd00959">
    <property type="entry name" value="DeoC"/>
    <property type="match status" value="1"/>
</dbReference>
<dbReference type="FunFam" id="3.20.20.70:FF:000044">
    <property type="entry name" value="Deoxyribose-phosphate aldolase"/>
    <property type="match status" value="1"/>
</dbReference>
<dbReference type="Gene3D" id="3.20.20.70">
    <property type="entry name" value="Aldolase class I"/>
    <property type="match status" value="1"/>
</dbReference>
<dbReference type="HAMAP" id="MF_00114">
    <property type="entry name" value="DeoC_type1"/>
    <property type="match status" value="1"/>
</dbReference>
<dbReference type="InterPro" id="IPR013785">
    <property type="entry name" value="Aldolase_TIM"/>
</dbReference>
<dbReference type="InterPro" id="IPR011343">
    <property type="entry name" value="DeoC"/>
</dbReference>
<dbReference type="InterPro" id="IPR002915">
    <property type="entry name" value="DeoC/FbaB/LacD_aldolase"/>
</dbReference>
<dbReference type="InterPro" id="IPR028581">
    <property type="entry name" value="DeoC_typeI"/>
</dbReference>
<dbReference type="NCBIfam" id="TIGR00126">
    <property type="entry name" value="deoC"/>
    <property type="match status" value="1"/>
</dbReference>
<dbReference type="PANTHER" id="PTHR10889">
    <property type="entry name" value="DEOXYRIBOSE-PHOSPHATE ALDOLASE"/>
    <property type="match status" value="1"/>
</dbReference>
<dbReference type="PANTHER" id="PTHR10889:SF1">
    <property type="entry name" value="DEOXYRIBOSE-PHOSPHATE ALDOLASE"/>
    <property type="match status" value="1"/>
</dbReference>
<dbReference type="Pfam" id="PF01791">
    <property type="entry name" value="DeoC"/>
    <property type="match status" value="1"/>
</dbReference>
<dbReference type="PIRSF" id="PIRSF001357">
    <property type="entry name" value="DeoC"/>
    <property type="match status" value="1"/>
</dbReference>
<dbReference type="SMART" id="SM01133">
    <property type="entry name" value="DeoC"/>
    <property type="match status" value="1"/>
</dbReference>
<dbReference type="SUPFAM" id="SSF51569">
    <property type="entry name" value="Aldolase"/>
    <property type="match status" value="1"/>
</dbReference>
<gene>
    <name evidence="1" type="primary">deoC</name>
    <name type="ordered locus">Clos_1361</name>
</gene>
<feature type="chain" id="PRO_1000057746" description="Deoxyribose-phosphate aldolase">
    <location>
        <begin position="1"/>
        <end position="222"/>
    </location>
</feature>
<feature type="active site" description="Proton donor/acceptor" evidence="1">
    <location>
        <position position="89"/>
    </location>
</feature>
<feature type="active site" description="Schiff-base intermediate with acetaldehyde" evidence="1">
    <location>
        <position position="152"/>
    </location>
</feature>
<feature type="active site" description="Proton donor/acceptor" evidence="1">
    <location>
        <position position="181"/>
    </location>
</feature>